<dbReference type="EMBL" id="CP000094">
    <property type="protein sequence ID" value="ABA76422.1"/>
    <property type="molecule type" value="Genomic_DNA"/>
</dbReference>
<dbReference type="RefSeq" id="WP_011335870.1">
    <property type="nucleotide sequence ID" value="NC_007492.2"/>
</dbReference>
<dbReference type="SMR" id="Q3K732"/>
<dbReference type="KEGG" id="pfo:Pfl01_4685"/>
<dbReference type="eggNOG" id="COG0792">
    <property type="taxonomic scope" value="Bacteria"/>
</dbReference>
<dbReference type="HOGENOM" id="CLU_115353_1_0_6"/>
<dbReference type="Proteomes" id="UP000002704">
    <property type="component" value="Chromosome"/>
</dbReference>
<dbReference type="GO" id="GO:0003676">
    <property type="term" value="F:nucleic acid binding"/>
    <property type="evidence" value="ECO:0007669"/>
    <property type="project" value="InterPro"/>
</dbReference>
<dbReference type="CDD" id="cd20736">
    <property type="entry name" value="PoNe_Nuclease"/>
    <property type="match status" value="1"/>
</dbReference>
<dbReference type="Gene3D" id="3.40.1350.10">
    <property type="match status" value="1"/>
</dbReference>
<dbReference type="HAMAP" id="MF_00048">
    <property type="entry name" value="UPF0102"/>
    <property type="match status" value="1"/>
</dbReference>
<dbReference type="InterPro" id="IPR011335">
    <property type="entry name" value="Restrct_endonuc-II-like"/>
</dbReference>
<dbReference type="InterPro" id="IPR011856">
    <property type="entry name" value="tRNA_endonuc-like_dom_sf"/>
</dbReference>
<dbReference type="InterPro" id="IPR003509">
    <property type="entry name" value="UPF0102_YraN-like"/>
</dbReference>
<dbReference type="NCBIfam" id="NF009150">
    <property type="entry name" value="PRK12497.1-3"/>
    <property type="match status" value="1"/>
</dbReference>
<dbReference type="NCBIfam" id="TIGR00252">
    <property type="entry name" value="YraN family protein"/>
    <property type="match status" value="1"/>
</dbReference>
<dbReference type="PANTHER" id="PTHR34039">
    <property type="entry name" value="UPF0102 PROTEIN YRAN"/>
    <property type="match status" value="1"/>
</dbReference>
<dbReference type="PANTHER" id="PTHR34039:SF1">
    <property type="entry name" value="UPF0102 PROTEIN YRAN"/>
    <property type="match status" value="1"/>
</dbReference>
<dbReference type="Pfam" id="PF02021">
    <property type="entry name" value="UPF0102"/>
    <property type="match status" value="1"/>
</dbReference>
<dbReference type="SUPFAM" id="SSF52980">
    <property type="entry name" value="Restriction endonuclease-like"/>
    <property type="match status" value="1"/>
</dbReference>
<sequence length="120" mass="13997">MPDRSHLQSGKDAERQALEHLQHQGLRLLAQNWLCKRGELDLVMLDGDTVVFVEVRYRKNTQWGGALDSIDGRKRQKLIFAAQYFLQRESRWANSPCRFDVVAIDSHQDQLNWLQNAFDS</sequence>
<gene>
    <name type="ordered locus">Pfl01_4685</name>
</gene>
<protein>
    <recommendedName>
        <fullName evidence="1">UPF0102 protein Pfl01_4685</fullName>
    </recommendedName>
</protein>
<proteinExistence type="inferred from homology"/>
<reference key="1">
    <citation type="journal article" date="2009" name="Genome Biol.">
        <title>Genomic and genetic analyses of diversity and plant interactions of Pseudomonas fluorescens.</title>
        <authorList>
            <person name="Silby M.W."/>
            <person name="Cerdeno-Tarraga A.M."/>
            <person name="Vernikos G.S."/>
            <person name="Giddens S.R."/>
            <person name="Jackson R.W."/>
            <person name="Preston G.M."/>
            <person name="Zhang X.-X."/>
            <person name="Moon C.D."/>
            <person name="Gehrig S.M."/>
            <person name="Godfrey S.A.C."/>
            <person name="Knight C.G."/>
            <person name="Malone J.G."/>
            <person name="Robinson Z."/>
            <person name="Spiers A.J."/>
            <person name="Harris S."/>
            <person name="Challis G.L."/>
            <person name="Yaxley A.M."/>
            <person name="Harris D."/>
            <person name="Seeger K."/>
            <person name="Murphy L."/>
            <person name="Rutter S."/>
            <person name="Squares R."/>
            <person name="Quail M.A."/>
            <person name="Saunders E."/>
            <person name="Mavromatis K."/>
            <person name="Brettin T.S."/>
            <person name="Bentley S.D."/>
            <person name="Hothersall J."/>
            <person name="Stephens E."/>
            <person name="Thomas C.M."/>
            <person name="Parkhill J."/>
            <person name="Levy S.B."/>
            <person name="Rainey P.B."/>
            <person name="Thomson N.R."/>
        </authorList>
    </citation>
    <scope>NUCLEOTIDE SEQUENCE [LARGE SCALE GENOMIC DNA]</scope>
    <source>
        <strain>Pf0-1</strain>
    </source>
</reference>
<comment type="similarity">
    <text evidence="1">Belongs to the UPF0102 family.</text>
</comment>
<name>Y4685_PSEPF</name>
<feature type="chain" id="PRO_0000336230" description="UPF0102 protein Pfl01_4685">
    <location>
        <begin position="1"/>
        <end position="120"/>
    </location>
</feature>
<organism>
    <name type="scientific">Pseudomonas fluorescens (strain Pf0-1)</name>
    <dbReference type="NCBI Taxonomy" id="205922"/>
    <lineage>
        <taxon>Bacteria</taxon>
        <taxon>Pseudomonadati</taxon>
        <taxon>Pseudomonadota</taxon>
        <taxon>Gammaproteobacteria</taxon>
        <taxon>Pseudomonadales</taxon>
        <taxon>Pseudomonadaceae</taxon>
        <taxon>Pseudomonas</taxon>
    </lineage>
</organism>
<evidence type="ECO:0000255" key="1">
    <source>
        <dbReference type="HAMAP-Rule" id="MF_00048"/>
    </source>
</evidence>
<accession>Q3K732</accession>